<sequence length="244" mass="25560">MNFEGKIALVTGASRGIGRAIAETLAARGAKVIGTATSENGAQAISDYLGANGKGLMLNVTDPASIESVLEKIRAEFGEVDILVNNAGITRDNLLMRMKDEEWNDIIETNLSSVFRLSKAVMRAMMKKRHGRIITIGSVVGTMGNGGQANYAAAKAGLIGFSKSLAREVASRGITVNVVAPGFIETDMTRALSDDQRAGILAQVPAGRLGGAQEIANAVAFLASDEAAYITGETLHVNGGMYMV</sequence>
<evidence type="ECO:0000250" key="1"/>
<evidence type="ECO:0000255" key="2">
    <source>
        <dbReference type="PROSITE-ProRule" id="PRU10001"/>
    </source>
</evidence>
<evidence type="ECO:0000269" key="3">
    <source>
    </source>
</evidence>
<evidence type="ECO:0000269" key="4">
    <source>
    </source>
</evidence>
<evidence type="ECO:0000269" key="5">
    <source>
    </source>
</evidence>
<evidence type="ECO:0000269" key="6">
    <source>
    </source>
</evidence>
<evidence type="ECO:0000269" key="7">
    <source>
    </source>
</evidence>
<evidence type="ECO:0000269" key="8">
    <source>
    </source>
</evidence>
<evidence type="ECO:0000269" key="9">
    <source>
    </source>
</evidence>
<evidence type="ECO:0000269" key="10">
    <source>
    </source>
</evidence>
<evidence type="ECO:0000269" key="11">
    <source>
    </source>
</evidence>
<evidence type="ECO:0000305" key="12"/>
<evidence type="ECO:0007744" key="13">
    <source>
        <dbReference type="PDB" id="1Q7B"/>
    </source>
</evidence>
<evidence type="ECO:0007744" key="14">
    <source>
        <dbReference type="PDB" id="1Q7C"/>
    </source>
</evidence>
<evidence type="ECO:0007829" key="15">
    <source>
        <dbReference type="PDB" id="1Q7B"/>
    </source>
</evidence>
<organism>
    <name type="scientific">Escherichia coli (strain K12)</name>
    <dbReference type="NCBI Taxonomy" id="83333"/>
    <lineage>
        <taxon>Bacteria</taxon>
        <taxon>Pseudomonadati</taxon>
        <taxon>Pseudomonadota</taxon>
        <taxon>Gammaproteobacteria</taxon>
        <taxon>Enterobacterales</taxon>
        <taxon>Enterobacteriaceae</taxon>
        <taxon>Escherichia</taxon>
    </lineage>
</organism>
<keyword id="KW-0002">3D-structure</keyword>
<keyword id="KW-0106">Calcium</keyword>
<keyword id="KW-0275">Fatty acid biosynthesis</keyword>
<keyword id="KW-0276">Fatty acid metabolism</keyword>
<keyword id="KW-0444">Lipid biosynthesis</keyword>
<keyword id="KW-0443">Lipid metabolism</keyword>
<keyword id="KW-0479">Metal-binding</keyword>
<keyword id="KW-0521">NADP</keyword>
<keyword id="KW-0560">Oxidoreductase</keyword>
<keyword id="KW-1185">Reference proteome</keyword>
<reference key="1">
    <citation type="journal article" date="1992" name="J. Biol. Chem.">
        <title>The gene encoding Escherichia coli acyl carrier protein lies within a cluster of fatty acid biosynthetic genes.</title>
        <authorList>
            <person name="Rawlings M."/>
            <person name="Cronan J.E. Jr."/>
        </authorList>
    </citation>
    <scope>NUCLEOTIDE SEQUENCE [GENOMIC DNA]</scope>
    <scope>NOMENCLATURE</scope>
    <source>
        <strain>K12</strain>
    </source>
</reference>
<reference key="2">
    <citation type="journal article" date="1996" name="DNA Res.">
        <title>A 718-kb DNA sequence of the Escherichia coli K-12 genome corresponding to the 12.7-28.0 min region on the linkage map.</title>
        <authorList>
            <person name="Oshima T."/>
            <person name="Aiba H."/>
            <person name="Baba T."/>
            <person name="Fujita K."/>
            <person name="Hayashi K."/>
            <person name="Honjo A."/>
            <person name="Ikemoto K."/>
            <person name="Inada T."/>
            <person name="Itoh T."/>
            <person name="Kajihara M."/>
            <person name="Kanai K."/>
            <person name="Kashimoto K."/>
            <person name="Kimura S."/>
            <person name="Kitagawa M."/>
            <person name="Makino K."/>
            <person name="Masuda S."/>
            <person name="Miki T."/>
            <person name="Mizobuchi K."/>
            <person name="Mori H."/>
            <person name="Motomura K."/>
            <person name="Nakamura Y."/>
            <person name="Nashimoto H."/>
            <person name="Nishio Y."/>
            <person name="Saito N."/>
            <person name="Sampei G."/>
            <person name="Seki Y."/>
            <person name="Tagami H."/>
            <person name="Takemoto K."/>
            <person name="Wada C."/>
            <person name="Yamamoto Y."/>
            <person name="Yano M."/>
            <person name="Horiuchi T."/>
        </authorList>
    </citation>
    <scope>NUCLEOTIDE SEQUENCE [LARGE SCALE GENOMIC DNA]</scope>
    <source>
        <strain>K12 / W3110 / ATCC 27325 / DSM 5911</strain>
    </source>
</reference>
<reference key="3">
    <citation type="journal article" date="1997" name="Science">
        <title>The complete genome sequence of Escherichia coli K-12.</title>
        <authorList>
            <person name="Blattner F.R."/>
            <person name="Plunkett G. III"/>
            <person name="Bloch C.A."/>
            <person name="Perna N.T."/>
            <person name="Burland V."/>
            <person name="Riley M."/>
            <person name="Collado-Vides J."/>
            <person name="Glasner J.D."/>
            <person name="Rode C.K."/>
            <person name="Mayhew G.F."/>
            <person name="Gregor J."/>
            <person name="Davis N.W."/>
            <person name="Kirkpatrick H.A."/>
            <person name="Goeden M.A."/>
            <person name="Rose D.J."/>
            <person name="Mau B."/>
            <person name="Shao Y."/>
        </authorList>
    </citation>
    <scope>NUCLEOTIDE SEQUENCE [LARGE SCALE GENOMIC DNA]</scope>
    <source>
        <strain>K12 / MG1655 / ATCC 47076</strain>
    </source>
</reference>
<reference key="4">
    <citation type="journal article" date="2006" name="Mol. Syst. Biol.">
        <title>Highly accurate genome sequences of Escherichia coli K-12 strains MG1655 and W3110.</title>
        <authorList>
            <person name="Hayashi K."/>
            <person name="Morooka N."/>
            <person name="Yamamoto Y."/>
            <person name="Fujita K."/>
            <person name="Isono K."/>
            <person name="Choi S."/>
            <person name="Ohtsubo E."/>
            <person name="Baba T."/>
            <person name="Wanner B.L."/>
            <person name="Mori H."/>
            <person name="Horiuchi T."/>
        </authorList>
    </citation>
    <scope>NUCLEOTIDE SEQUENCE [LARGE SCALE GENOMIC DNA]</scope>
    <source>
        <strain>K12 / W3110 / ATCC 27325 / DSM 5911</strain>
    </source>
</reference>
<reference key="5">
    <citation type="journal article" date="1992" name="J. Bacteriol.">
        <title>Cloning, nucleotide sequence, and expression of the Escherichia coli fabD gene, encoding malonyl coenzyme A-acyl carrier protein transacylase.</title>
        <authorList>
            <person name="Verwoert I.I.G.S."/>
            <person name="Verbree E.C."/>
            <person name="van der Linden K.H."/>
            <person name="Nijkamp H.J."/>
            <person name="Stuitje A.R."/>
        </authorList>
    </citation>
    <scope>NUCLEOTIDE SEQUENCE [GENOMIC DNA] OF 1-45</scope>
    <source>
        <strain>K12</strain>
    </source>
</reference>
<reference key="6">
    <citation type="journal article" date="1966" name="Biochim. Biophys. Acta">
        <title>Studies on the mechanism of fatty acid synthesis. XV. Preparation and general properties of beta-ketoacyl acyl carrier protein reductase from Escherichia coli.</title>
        <authorList>
            <person name="Toomey R.E."/>
            <person name="Wakil S.J."/>
        </authorList>
    </citation>
    <scope>SUBSTRATE SPECIFICITY</scope>
    <scope>BIOPHYSICOCHEMICAL PROPERTIES</scope>
</reference>
<reference key="7">
    <citation type="journal article" date="1995" name="J. Biol. Chem.">
        <title>Enoyl-acyl carrier protein reductase (fabI) plays a determinant role in completing cycles of fatty acid elongation in Escherichia coli.</title>
        <authorList>
            <person name="Heath R.J."/>
            <person name="Rock C.O."/>
        </authorList>
    </citation>
    <scope>FUNCTION</scope>
    <scope>CATALYTIC ACTIVITY</scope>
    <scope>PATHWAY</scope>
</reference>
<reference key="8">
    <citation type="journal article" date="1996" name="J. Biol. Chem.">
        <title>Inhibition of beta-ketoacyl-acyl carrier protein synthase III (FabH) by acyl-acyl carrier protein in Escherichia coli.</title>
        <authorList>
            <person name="Heath R.J."/>
            <person name="Rock C.O."/>
        </authorList>
    </citation>
    <scope>FUNCTION AS A BETA-KETOACYL-ACP REDUCTASE</scope>
    <scope>CATALYTIC ACTIVITY</scope>
</reference>
<reference key="9">
    <citation type="journal article" date="1996" name="J. Biol. Chem.">
        <title>Roles of the FabA and FabZ beta-hydroxyacyl-acyl carrier protein dehydratases in Escherichia coli fatty acid biosynthesis.</title>
        <authorList>
            <person name="Heath R.J."/>
            <person name="Rock C.O."/>
        </authorList>
    </citation>
    <scope>FUNCTION</scope>
    <scope>CATALYTIC ACTIVITY</scope>
</reference>
<reference key="10">
    <citation type="journal article" date="2000" name="J. Bacteriol.">
        <title>Beta-ketoacyl-acyl carrier protein synthase III (FabH) is a determining factor in branched-chain fatty acid biosynthesis.</title>
        <authorList>
            <person name="Choi K.-H."/>
            <person name="Heath R.J."/>
            <person name="Rock C.O."/>
        </authorList>
    </citation>
    <scope>FUNCTION</scope>
    <scope>CATALYTIC ACTIVITY</scope>
</reference>
<reference key="11">
    <citation type="journal article" date="2004" name="J. Bacteriol.">
        <title>Isolation and characterization of beta-ketoacyl-acyl carrier protein reductase (fabG) mutants of Escherichia coli and Salmonella enterica serovar Typhimurium.</title>
        <authorList>
            <person name="Lai C.Y."/>
            <person name="Cronan J.E."/>
        </authorList>
    </citation>
    <scope>FUNCTION IN FATTY ACID BIOSYNTHESIS AND AS A BETA-KETOACYL-ACP REDUCTASE</scope>
    <scope>MUTAGENESIS OF ALA-154 AND GLU-233</scope>
</reference>
<reference key="12">
    <citation type="journal article" date="2009" name="Chem. Biol. Interact.">
        <title>Novel inhibitors of beta-ketoacyl-ACP reductase from Escherichia coli.</title>
        <authorList>
            <person name="Kristan K."/>
            <person name="Bratkovic T."/>
            <person name="Sova M."/>
            <person name="Gobec S."/>
            <person name="Prezelj A."/>
            <person name="Urleb U."/>
        </authorList>
    </citation>
    <scope>ACTIVITY REGULATION</scope>
</reference>
<reference key="13">
    <citation type="journal article" date="2001" name="Biochemistry">
        <title>Structure of beta-ketoacyl-[acyl carrier-protein] reductase from Escherichia coli: negative cooperativity and its structural basis.</title>
        <authorList>
            <person name="Price A.C."/>
            <person name="Zhang Y.-M."/>
            <person name="Rock C.O."/>
            <person name="White S.W."/>
        </authorList>
    </citation>
    <scope>X-RAY CRYSTALLOGRAPHY (2.6 ANGSTROMS)</scope>
    <scope>SUBUNIT</scope>
</reference>
<reference key="14">
    <citation type="journal article" date="2004" name="Structure">
        <title>Cofactor-induced conformational rearrangements establish a catalytically competent active site and a proton relay conduit in FabG.</title>
        <authorList>
            <person name="Price A.C."/>
            <person name="Zhang Y.M."/>
            <person name="Rock C.O."/>
            <person name="White S.W."/>
        </authorList>
    </citation>
    <scope>X-RAY CRYSTALLOGRAPHY (2.05 ANGSTROMS) IN COMPLEX WITH NADP</scope>
    <scope>MUTAGENESIS OF TYR-151 AND LYS-155</scope>
    <scope>REACTION MECHANISM</scope>
    <scope>SUBUNIT</scope>
</reference>
<comment type="function">
    <text evidence="3 5 9 10 11">Catalyzes the NADPH-dependent reduction of beta-ketoacyl-ACP substrates to beta-hydroxyacyl-ACP products, the first reductive step in the elongation cycle of fatty acid biosynthesis.</text>
</comment>
<comment type="catalytic activity">
    <reaction evidence="3 9 10 11">
        <text>a (3R)-hydroxyacyl-[ACP] + NADP(+) = a 3-oxoacyl-[ACP] + NADPH + H(+)</text>
        <dbReference type="Rhea" id="RHEA:17397"/>
        <dbReference type="Rhea" id="RHEA-COMP:9916"/>
        <dbReference type="Rhea" id="RHEA-COMP:9945"/>
        <dbReference type="ChEBI" id="CHEBI:15378"/>
        <dbReference type="ChEBI" id="CHEBI:57783"/>
        <dbReference type="ChEBI" id="CHEBI:58349"/>
        <dbReference type="ChEBI" id="CHEBI:78776"/>
        <dbReference type="ChEBI" id="CHEBI:78827"/>
        <dbReference type="EC" id="1.1.1.100"/>
    </reaction>
    <physiologicalReaction direction="right-to-left" evidence="3 9 11">
        <dbReference type="Rhea" id="RHEA:17399"/>
    </physiologicalReaction>
</comment>
<comment type="catalytic activity">
    <reaction evidence="3 9 11">
        <text>3-oxobutanoyl-[ACP] + NADPH + H(+) = (3R)-hydroxybutanoyl-[ACP] + NADP(+)</text>
        <dbReference type="Rhea" id="RHEA:41804"/>
        <dbReference type="Rhea" id="RHEA-COMP:9625"/>
        <dbReference type="Rhea" id="RHEA-COMP:9626"/>
        <dbReference type="ChEBI" id="CHEBI:15378"/>
        <dbReference type="ChEBI" id="CHEBI:57783"/>
        <dbReference type="ChEBI" id="CHEBI:58349"/>
        <dbReference type="ChEBI" id="CHEBI:78450"/>
        <dbReference type="ChEBI" id="CHEBI:78451"/>
    </reaction>
    <physiologicalReaction direction="left-to-right" evidence="3 9 11">
        <dbReference type="Rhea" id="RHEA:41805"/>
    </physiologicalReaction>
</comment>
<comment type="catalytic activity">
    <reaction evidence="3">
        <text>3-oxopentanoyl-[ACP] + NADPH + H(+) = (3R)-hydroxypentanoyl-[ACP] + NADP(+)</text>
        <dbReference type="Rhea" id="RHEA:55100"/>
        <dbReference type="Rhea" id="RHEA-COMP:9939"/>
        <dbReference type="Rhea" id="RHEA-COMP:14091"/>
        <dbReference type="ChEBI" id="CHEBI:15378"/>
        <dbReference type="ChEBI" id="CHEBI:57783"/>
        <dbReference type="ChEBI" id="CHEBI:58349"/>
        <dbReference type="ChEBI" id="CHEBI:78818"/>
        <dbReference type="ChEBI" id="CHEBI:78983"/>
    </reaction>
    <physiologicalReaction direction="left-to-right" evidence="3">
        <dbReference type="Rhea" id="RHEA:55101"/>
    </physiologicalReaction>
</comment>
<comment type="catalytic activity">
    <reaction evidence="3">
        <text>3-oxohexanoyl-[ACP] + NADPH + H(+) = (3R)-hydroxyhexanoyl-[ACP] + NADP(+)</text>
        <dbReference type="Rhea" id="RHEA:41824"/>
        <dbReference type="Rhea" id="RHEA-COMP:9629"/>
        <dbReference type="Rhea" id="RHEA-COMP:9630"/>
        <dbReference type="ChEBI" id="CHEBI:15378"/>
        <dbReference type="ChEBI" id="CHEBI:57783"/>
        <dbReference type="ChEBI" id="CHEBI:58349"/>
        <dbReference type="ChEBI" id="CHEBI:78456"/>
        <dbReference type="ChEBI" id="CHEBI:78457"/>
    </reaction>
    <physiologicalReaction direction="left-to-right" evidence="3">
        <dbReference type="Rhea" id="RHEA:41825"/>
    </physiologicalReaction>
</comment>
<comment type="catalytic activity">
    <reaction evidence="3">
        <text>3-oxoheptanoyl-[ACP] + NADPH + H(+) = (3R)-hydroxyheptanoyl-[ACP] + NADP(+)</text>
        <dbReference type="Rhea" id="RHEA:55104"/>
        <dbReference type="Rhea" id="RHEA-COMP:9943"/>
        <dbReference type="Rhea" id="RHEA-COMP:14092"/>
        <dbReference type="ChEBI" id="CHEBI:15378"/>
        <dbReference type="ChEBI" id="CHEBI:57783"/>
        <dbReference type="ChEBI" id="CHEBI:58349"/>
        <dbReference type="ChEBI" id="CHEBI:78824"/>
        <dbReference type="ChEBI" id="CHEBI:78987"/>
    </reaction>
    <physiologicalReaction direction="left-to-right" evidence="3">
        <dbReference type="Rhea" id="RHEA:55105"/>
    </physiologicalReaction>
</comment>
<comment type="catalytic activity">
    <reaction evidence="3">
        <text>3-oxooctanoyl-[ACP] + NADPH + H(+) = (3R)-hydroxyoctanoyl-[ACP] + NADP(+)</text>
        <dbReference type="Rhea" id="RHEA:41840"/>
        <dbReference type="Rhea" id="RHEA-COMP:9633"/>
        <dbReference type="Rhea" id="RHEA-COMP:9634"/>
        <dbReference type="ChEBI" id="CHEBI:15378"/>
        <dbReference type="ChEBI" id="CHEBI:57783"/>
        <dbReference type="ChEBI" id="CHEBI:58349"/>
        <dbReference type="ChEBI" id="CHEBI:78460"/>
        <dbReference type="ChEBI" id="CHEBI:78461"/>
    </reaction>
    <physiologicalReaction direction="left-to-right" evidence="3">
        <dbReference type="Rhea" id="RHEA:41841"/>
    </physiologicalReaction>
</comment>
<comment type="catalytic activity">
    <reaction evidence="3">
        <text>3-oxononanoyl-[ACP] + NADPH + H(+) = (3R)-hydroxynonanoyl-[ACP] + NADP(+)</text>
        <dbReference type="Rhea" id="RHEA:55108"/>
        <dbReference type="Rhea" id="RHEA-COMP:9944"/>
        <dbReference type="Rhea" id="RHEA-COMP:14093"/>
        <dbReference type="ChEBI" id="CHEBI:15378"/>
        <dbReference type="ChEBI" id="CHEBI:57783"/>
        <dbReference type="ChEBI" id="CHEBI:58349"/>
        <dbReference type="ChEBI" id="CHEBI:78826"/>
        <dbReference type="ChEBI" id="CHEBI:78988"/>
    </reaction>
    <physiologicalReaction direction="left-to-right" evidence="3">
        <dbReference type="Rhea" id="RHEA:55109"/>
    </physiologicalReaction>
</comment>
<comment type="catalytic activity">
    <reaction evidence="3 11">
        <text>3-oxodecanoyl-[ACP] + NADPH + H(+) = (3R)-hydroxydecanoyl-[ACP] + NADP(+)</text>
        <dbReference type="Rhea" id="RHEA:41856"/>
        <dbReference type="Rhea" id="RHEA-COMP:9637"/>
        <dbReference type="Rhea" id="RHEA-COMP:9638"/>
        <dbReference type="ChEBI" id="CHEBI:15378"/>
        <dbReference type="ChEBI" id="CHEBI:57783"/>
        <dbReference type="ChEBI" id="CHEBI:58349"/>
        <dbReference type="ChEBI" id="CHEBI:78464"/>
        <dbReference type="ChEBI" id="CHEBI:78466"/>
    </reaction>
    <physiologicalReaction direction="left-to-right" evidence="3 11">
        <dbReference type="Rhea" id="RHEA:41857"/>
    </physiologicalReaction>
</comment>
<comment type="catalytic activity">
    <reaction evidence="11">
        <text>3-oxohexadecanoyl-[ACP] + NADPH + H(+) = (3R)-hydroxyhexadecanoyl-[ACP] + NADP(+)</text>
        <dbReference type="Rhea" id="RHEA:41904"/>
        <dbReference type="Rhea" id="RHEA-COMP:9649"/>
        <dbReference type="Rhea" id="RHEA-COMP:9650"/>
        <dbReference type="ChEBI" id="CHEBI:15378"/>
        <dbReference type="ChEBI" id="CHEBI:57783"/>
        <dbReference type="ChEBI" id="CHEBI:58349"/>
        <dbReference type="ChEBI" id="CHEBI:78478"/>
        <dbReference type="ChEBI" id="CHEBI:78480"/>
    </reaction>
    <physiologicalReaction direction="left-to-right" evidence="11">
        <dbReference type="Rhea" id="RHEA:41905"/>
    </physiologicalReaction>
</comment>
<comment type="catalytic activity">
    <reaction evidence="11">
        <text>3-oxo-(9Z)-hexadecenoyl-[ACP] + NADPH + H(+) = (3R)-hydroxy-(9Z)-hexadecenoyl-[ACP] + NADP(+)</text>
        <dbReference type="Rhea" id="RHEA:54928"/>
        <dbReference type="Rhea" id="RHEA-COMP:14038"/>
        <dbReference type="Rhea" id="RHEA-COMP:14040"/>
        <dbReference type="ChEBI" id="CHEBI:15378"/>
        <dbReference type="ChEBI" id="CHEBI:57783"/>
        <dbReference type="ChEBI" id="CHEBI:58349"/>
        <dbReference type="ChEBI" id="CHEBI:138406"/>
        <dbReference type="ChEBI" id="CHEBI:138407"/>
    </reaction>
    <physiologicalReaction direction="left-to-right" evidence="11">
        <dbReference type="Rhea" id="RHEA:54929"/>
    </physiologicalReaction>
</comment>
<comment type="catalytic activity">
    <reaction evidence="3">
        <text>4-methyl-3-oxopentanoyl-[ACP] + NADPH + H(+) = (3R)-hydroxy-4-methylpentanoyl-[ACP] + NADP(+)</text>
        <dbReference type="Rhea" id="RHEA:55112"/>
        <dbReference type="Rhea" id="RHEA-COMP:9940"/>
        <dbReference type="Rhea" id="RHEA-COMP:14094"/>
        <dbReference type="ChEBI" id="CHEBI:15378"/>
        <dbReference type="ChEBI" id="CHEBI:57783"/>
        <dbReference type="ChEBI" id="CHEBI:58349"/>
        <dbReference type="ChEBI" id="CHEBI:78820"/>
        <dbReference type="ChEBI" id="CHEBI:78984"/>
    </reaction>
    <physiologicalReaction direction="left-to-right" evidence="3">
        <dbReference type="Rhea" id="RHEA:55113"/>
    </physiologicalReaction>
</comment>
<comment type="catalytic activity">
    <reaction evidence="3">
        <text>5-methyl-3-oxohexanoyl-[ACP] + NADPH + H(+) = (3R)-hydroxy-5-methylhexanoyl-[ACP] + NADP(+)</text>
        <dbReference type="Rhea" id="RHEA:55116"/>
        <dbReference type="Rhea" id="RHEA-COMP:9941"/>
        <dbReference type="Rhea" id="RHEA-COMP:14095"/>
        <dbReference type="ChEBI" id="CHEBI:15378"/>
        <dbReference type="ChEBI" id="CHEBI:57783"/>
        <dbReference type="ChEBI" id="CHEBI:58349"/>
        <dbReference type="ChEBI" id="CHEBI:78822"/>
        <dbReference type="ChEBI" id="CHEBI:78986"/>
    </reaction>
    <physiologicalReaction direction="left-to-right" evidence="3">
        <dbReference type="Rhea" id="RHEA:55117"/>
    </physiologicalReaction>
</comment>
<comment type="catalytic activity">
    <reaction evidence="3">
        <text>4-methyl-3-oxohexanoyl-[ACP] + NADPH + H(+) = (3R)-hydroxy-4-methylhexanoyl-[ACP] + NADP(+)</text>
        <dbReference type="Rhea" id="RHEA:55120"/>
        <dbReference type="Rhea" id="RHEA-COMP:9942"/>
        <dbReference type="Rhea" id="RHEA-COMP:14096"/>
        <dbReference type="ChEBI" id="CHEBI:15378"/>
        <dbReference type="ChEBI" id="CHEBI:57783"/>
        <dbReference type="ChEBI" id="CHEBI:58349"/>
        <dbReference type="ChEBI" id="CHEBI:78823"/>
        <dbReference type="ChEBI" id="CHEBI:78985"/>
    </reaction>
    <physiologicalReaction direction="left-to-right" evidence="3">
        <dbReference type="Rhea" id="RHEA:55121"/>
    </physiologicalReaction>
</comment>
<comment type="activity regulation">
    <text evidence="7">Inhibited by cinnamic acid derivatives.</text>
</comment>
<comment type="biophysicochemical properties">
    <phDependence>
        <text evidence="8">Optimum pH is between 6.0 and 7.0.</text>
    </phDependence>
</comment>
<comment type="pathway">
    <text evidence="5 9">Lipid metabolism; fatty acid biosynthesis.</text>
</comment>
<comment type="subunit">
    <text evidence="4 6">Homotetramer.</text>
</comment>
<comment type="miscellaneous">
    <text>Calcium ions stabilize the structure, and may inhibit FabG activity by obstructing access to the active site.</text>
</comment>
<comment type="similarity">
    <text evidence="12">Belongs to the short-chain dehydrogenases/reductases (SDR) family.</text>
</comment>
<gene>
    <name type="primary">fabG</name>
    <name type="ordered locus">b1093</name>
    <name type="ordered locus">JW1079</name>
</gene>
<accession>P0AEK2</accession>
<accession>P25716</accession>
<accession>P78221</accession>
<accession>Q47202</accession>
<feature type="chain" id="PRO_0000054672" description="3-oxoacyl-[acyl-carrier-protein] reductase FabG">
    <location>
        <begin position="1"/>
        <end position="244"/>
    </location>
</feature>
<feature type="active site" description="Proton acceptor" evidence="2">
    <location>
        <position position="151"/>
    </location>
</feature>
<feature type="binding site" evidence="6 13 14">
    <location>
        <begin position="12"/>
        <end position="15"/>
    </location>
    <ligand>
        <name>NADP(+)</name>
        <dbReference type="ChEBI" id="CHEBI:58349"/>
    </ligand>
</feature>
<feature type="binding site" evidence="6 13 14">
    <location>
        <position position="37"/>
    </location>
    <ligand>
        <name>NADP(+)</name>
        <dbReference type="ChEBI" id="CHEBI:58349"/>
    </ligand>
</feature>
<feature type="binding site">
    <location>
        <position position="50"/>
    </location>
    <ligand>
        <name>Ca(2+)</name>
        <dbReference type="ChEBI" id="CHEBI:29108"/>
        <label>1</label>
        <note>ligand shared between dimeric partners</note>
    </ligand>
</feature>
<feature type="binding site">
    <location>
        <position position="53"/>
    </location>
    <ligand>
        <name>Ca(2+)</name>
        <dbReference type="ChEBI" id="CHEBI:29108"/>
        <label>1</label>
        <note>ligand shared between dimeric partners</note>
    </ligand>
</feature>
<feature type="binding site" evidence="6 13 14">
    <location>
        <begin position="59"/>
        <end position="60"/>
    </location>
    <ligand>
        <name>NADP(+)</name>
        <dbReference type="ChEBI" id="CHEBI:58349"/>
    </ligand>
</feature>
<feature type="binding site" evidence="6 13">
    <location>
        <position position="86"/>
    </location>
    <ligand>
        <name>NADP(+)</name>
        <dbReference type="ChEBI" id="CHEBI:58349"/>
    </ligand>
</feature>
<feature type="binding site" evidence="1">
    <location>
        <position position="138"/>
    </location>
    <ligand>
        <name>substrate</name>
    </ligand>
</feature>
<feature type="binding site">
    <location>
        <position position="145"/>
    </location>
    <ligand>
        <name>Ca(2+)</name>
        <dbReference type="ChEBI" id="CHEBI:29108"/>
        <label>2</label>
    </ligand>
</feature>
<feature type="binding site" evidence="6 13 14">
    <location>
        <begin position="151"/>
        <end position="155"/>
    </location>
    <ligand>
        <name>NADP(+)</name>
        <dbReference type="ChEBI" id="CHEBI:58349"/>
    </ligand>
</feature>
<feature type="binding site" evidence="6">
    <location>
        <position position="184"/>
    </location>
    <ligand>
        <name>NADP(+)</name>
        <dbReference type="ChEBI" id="CHEBI:58349"/>
    </ligand>
</feature>
<feature type="binding site">
    <location>
        <position position="233"/>
    </location>
    <ligand>
        <name>Ca(2+)</name>
        <dbReference type="ChEBI" id="CHEBI:29108"/>
        <label>3</label>
        <note>ligand shared between dimeric partners</note>
    </ligand>
</feature>
<feature type="binding site">
    <location>
        <position position="234"/>
    </location>
    <ligand>
        <name>Ca(2+)</name>
        <dbReference type="ChEBI" id="CHEBI:29108"/>
        <label>3</label>
        <note>ligand shared between dimeric partners</note>
    </ligand>
</feature>
<feature type="mutagenesis site" description="Defect in the affinity for NADPH." evidence="6">
    <original>Y</original>
    <variation>F</variation>
    <location>
        <position position="151"/>
    </location>
</feature>
<feature type="mutagenesis site" description="Decreases in the thermolability of the reductase; when associated with K-233." evidence="5">
    <original>A</original>
    <variation>T</variation>
    <location>
        <position position="154"/>
    </location>
</feature>
<feature type="mutagenesis site" description="Defect in the affinity for NADPH." evidence="6">
    <original>K</original>
    <variation>A</variation>
    <location>
        <position position="155"/>
    </location>
</feature>
<feature type="mutagenesis site" description="Decreases in the thermolability of the reductase; when associated with T-154." evidence="5">
    <original>E</original>
    <variation>K</variation>
    <location>
        <position position="233"/>
    </location>
</feature>
<feature type="sequence conflict" description="In Ref. 1; AAA23739." evidence="12" ref="1">
    <original>A</original>
    <variation>G</variation>
    <location>
        <position position="30"/>
    </location>
</feature>
<feature type="sequence conflict" description="In Ref. 1; AAA23739." evidence="12" ref="1">
    <original>Q</original>
    <variation>R</variation>
    <location>
        <position position="43"/>
    </location>
</feature>
<feature type="strand" evidence="15">
    <location>
        <begin position="7"/>
        <end position="12"/>
    </location>
</feature>
<feature type="helix" evidence="15">
    <location>
        <begin position="16"/>
        <end position="27"/>
    </location>
</feature>
<feature type="strand" evidence="15">
    <location>
        <begin position="31"/>
        <end position="38"/>
    </location>
</feature>
<feature type="helix" evidence="15">
    <location>
        <begin position="39"/>
        <end position="49"/>
    </location>
</feature>
<feature type="helix" evidence="15">
    <location>
        <begin position="50"/>
        <end position="52"/>
    </location>
</feature>
<feature type="strand" evidence="15">
    <location>
        <begin position="53"/>
        <end position="57"/>
    </location>
</feature>
<feature type="helix" evidence="15">
    <location>
        <begin position="63"/>
        <end position="76"/>
    </location>
</feature>
<feature type="strand" evidence="15">
    <location>
        <begin position="81"/>
        <end position="85"/>
    </location>
</feature>
<feature type="helix" evidence="15">
    <location>
        <begin position="95"/>
        <end position="97"/>
    </location>
</feature>
<feature type="helix" evidence="15">
    <location>
        <begin position="100"/>
        <end position="110"/>
    </location>
</feature>
<feature type="helix" evidence="15">
    <location>
        <begin position="112"/>
        <end position="128"/>
    </location>
</feature>
<feature type="strand" evidence="15">
    <location>
        <begin position="131"/>
        <end position="136"/>
    </location>
</feature>
<feature type="helix" evidence="15">
    <location>
        <begin position="139"/>
        <end position="143"/>
    </location>
</feature>
<feature type="helix" evidence="15">
    <location>
        <begin position="149"/>
        <end position="169"/>
    </location>
</feature>
<feature type="helix" evidence="15">
    <location>
        <begin position="170"/>
        <end position="172"/>
    </location>
</feature>
<feature type="strand" evidence="15">
    <location>
        <begin position="174"/>
        <end position="181"/>
    </location>
</feature>
<feature type="helix" evidence="15">
    <location>
        <begin position="187"/>
        <end position="190"/>
    </location>
</feature>
<feature type="helix" evidence="15">
    <location>
        <begin position="194"/>
        <end position="201"/>
    </location>
</feature>
<feature type="helix" evidence="15">
    <location>
        <begin position="212"/>
        <end position="223"/>
    </location>
</feature>
<feature type="helix" evidence="15">
    <location>
        <begin position="225"/>
        <end position="227"/>
    </location>
</feature>
<feature type="strand" evidence="15">
    <location>
        <begin position="234"/>
        <end position="238"/>
    </location>
</feature>
<dbReference type="EC" id="1.1.1.100" evidence="3 9 10 11"/>
<dbReference type="EMBL" id="M84991">
    <property type="protein sequence ID" value="AAA23739.1"/>
    <property type="molecule type" value="Genomic_DNA"/>
</dbReference>
<dbReference type="EMBL" id="U00096">
    <property type="protein sequence ID" value="AAC74177.1"/>
    <property type="molecule type" value="Genomic_DNA"/>
</dbReference>
<dbReference type="EMBL" id="AP009048">
    <property type="protein sequence ID" value="BAA35901.1"/>
    <property type="molecule type" value="Genomic_DNA"/>
</dbReference>
<dbReference type="EMBL" id="M87040">
    <property type="protein sequence ID" value="AAA23743.1"/>
    <property type="molecule type" value="Genomic_DNA"/>
</dbReference>
<dbReference type="PIR" id="B64853">
    <property type="entry name" value="B42147"/>
</dbReference>
<dbReference type="RefSeq" id="NP_415611.1">
    <property type="nucleotide sequence ID" value="NC_000913.3"/>
</dbReference>
<dbReference type="RefSeq" id="WP_001008535.1">
    <property type="nucleotide sequence ID" value="NZ_STEB01000016.1"/>
</dbReference>
<dbReference type="PDB" id="1I01">
    <property type="method" value="X-ray"/>
    <property type="resolution" value="2.60 A"/>
    <property type="chains" value="A/B/C/D/E/F/G/H=1-244"/>
</dbReference>
<dbReference type="PDB" id="1Q7B">
    <property type="method" value="X-ray"/>
    <property type="resolution" value="2.05 A"/>
    <property type="chains" value="A/B/C/D=1-244"/>
</dbReference>
<dbReference type="PDB" id="1Q7C">
    <property type="method" value="X-ray"/>
    <property type="resolution" value="2.50 A"/>
    <property type="chains" value="A/B=1-244"/>
</dbReference>
<dbReference type="PDBsum" id="1I01"/>
<dbReference type="PDBsum" id="1Q7B"/>
<dbReference type="PDBsum" id="1Q7C"/>
<dbReference type="SASBDB" id="P0AEK2"/>
<dbReference type="SMR" id="P0AEK2"/>
<dbReference type="BioGRID" id="4260080">
    <property type="interactions" value="231"/>
</dbReference>
<dbReference type="DIP" id="DIP-31869N"/>
<dbReference type="FunCoup" id="P0AEK2">
    <property type="interactions" value="914"/>
</dbReference>
<dbReference type="IntAct" id="P0AEK2">
    <property type="interactions" value="6"/>
</dbReference>
<dbReference type="STRING" id="511145.b1093"/>
<dbReference type="DrugBank" id="DB03461">
    <property type="generic name" value="Nicotinamide adenine dinucleotide phosphate"/>
</dbReference>
<dbReference type="SwissLipids" id="SLP:000000853"/>
<dbReference type="jPOST" id="P0AEK2"/>
<dbReference type="PaxDb" id="511145-b1093"/>
<dbReference type="EnsemblBacteria" id="AAC74177">
    <property type="protein sequence ID" value="AAC74177"/>
    <property type="gene ID" value="b1093"/>
</dbReference>
<dbReference type="GeneID" id="93776315"/>
<dbReference type="GeneID" id="945645"/>
<dbReference type="KEGG" id="ecj:JW1079"/>
<dbReference type="KEGG" id="eco:b1093"/>
<dbReference type="KEGG" id="ecoc:C3026_06610"/>
<dbReference type="PATRIC" id="fig|1411691.4.peg.1175"/>
<dbReference type="EchoBASE" id="EB1294"/>
<dbReference type="eggNOG" id="COG1028">
    <property type="taxonomic scope" value="Bacteria"/>
</dbReference>
<dbReference type="HOGENOM" id="CLU_010194_1_3_6"/>
<dbReference type="InParanoid" id="P0AEK2"/>
<dbReference type="OMA" id="LFGVQCD"/>
<dbReference type="OrthoDB" id="9804774at2"/>
<dbReference type="PhylomeDB" id="P0AEK2"/>
<dbReference type="BioCyc" id="EcoCyc:3-OXOACYL-ACP-REDUCT-MONOMER"/>
<dbReference type="BioCyc" id="MetaCyc:3-OXOACYL-ACP-REDUCT-MONOMER"/>
<dbReference type="BRENDA" id="1.1.1.100">
    <property type="organism ID" value="2026"/>
</dbReference>
<dbReference type="UniPathway" id="UPA00094"/>
<dbReference type="EvolutionaryTrace" id="P0AEK2"/>
<dbReference type="PRO" id="PR:P0AEK2"/>
<dbReference type="Proteomes" id="UP000000625">
    <property type="component" value="Chromosome"/>
</dbReference>
<dbReference type="GO" id="GO:0005829">
    <property type="term" value="C:cytosol"/>
    <property type="evidence" value="ECO:0000314"/>
    <property type="project" value="EcoCyc"/>
</dbReference>
<dbReference type="GO" id="GO:0004316">
    <property type="term" value="F:3-oxoacyl-[acyl-carrier-protein] reductase (NADPH) activity"/>
    <property type="evidence" value="ECO:0000314"/>
    <property type="project" value="EcoCyc"/>
</dbReference>
<dbReference type="GO" id="GO:0042802">
    <property type="term" value="F:identical protein binding"/>
    <property type="evidence" value="ECO:0000314"/>
    <property type="project" value="EcoCyc"/>
</dbReference>
<dbReference type="GO" id="GO:0046872">
    <property type="term" value="F:metal ion binding"/>
    <property type="evidence" value="ECO:0007669"/>
    <property type="project" value="UniProtKB-KW"/>
</dbReference>
<dbReference type="GO" id="GO:0051287">
    <property type="term" value="F:NAD binding"/>
    <property type="evidence" value="ECO:0007669"/>
    <property type="project" value="InterPro"/>
</dbReference>
<dbReference type="GO" id="GO:0050661">
    <property type="term" value="F:NADP binding"/>
    <property type="evidence" value="ECO:0000314"/>
    <property type="project" value="UniProtKB"/>
</dbReference>
<dbReference type="GO" id="GO:0016616">
    <property type="term" value="F:oxidoreductase activity, acting on the CH-OH group of donors, NAD or NADP as acceptor"/>
    <property type="evidence" value="ECO:0000318"/>
    <property type="project" value="GO_Central"/>
</dbReference>
<dbReference type="GO" id="GO:0009102">
    <property type="term" value="P:biotin biosynthetic process"/>
    <property type="evidence" value="ECO:0000315"/>
    <property type="project" value="EcoCyc"/>
</dbReference>
<dbReference type="GO" id="GO:0006633">
    <property type="term" value="P:fatty acid biosynthetic process"/>
    <property type="evidence" value="ECO:0000315"/>
    <property type="project" value="EcoCyc"/>
</dbReference>
<dbReference type="GO" id="GO:0030497">
    <property type="term" value="P:fatty acid elongation"/>
    <property type="evidence" value="ECO:0000315"/>
    <property type="project" value="UniProtKB"/>
</dbReference>
<dbReference type="GO" id="GO:0008610">
    <property type="term" value="P:lipid biosynthetic process"/>
    <property type="evidence" value="ECO:0000315"/>
    <property type="project" value="EcoCyc"/>
</dbReference>
<dbReference type="CDD" id="cd05333">
    <property type="entry name" value="BKR_SDR_c"/>
    <property type="match status" value="1"/>
</dbReference>
<dbReference type="FunFam" id="3.40.50.720:FF:000037">
    <property type="entry name" value="3-oxoacyl-[acyl-carrier-protein] reductase FabG"/>
    <property type="match status" value="1"/>
</dbReference>
<dbReference type="Gene3D" id="3.40.50.720">
    <property type="entry name" value="NAD(P)-binding Rossmann-like Domain"/>
    <property type="match status" value="1"/>
</dbReference>
<dbReference type="InterPro" id="IPR011284">
    <property type="entry name" value="3oxo_ACP_reduc"/>
</dbReference>
<dbReference type="InterPro" id="IPR036291">
    <property type="entry name" value="NAD(P)-bd_dom_sf"/>
</dbReference>
<dbReference type="InterPro" id="IPR020904">
    <property type="entry name" value="Sc_DH/Rdtase_CS"/>
</dbReference>
<dbReference type="InterPro" id="IPR050259">
    <property type="entry name" value="SDR"/>
</dbReference>
<dbReference type="InterPro" id="IPR002347">
    <property type="entry name" value="SDR_fam"/>
</dbReference>
<dbReference type="NCBIfam" id="TIGR01830">
    <property type="entry name" value="3oxo_ACP_reduc"/>
    <property type="match status" value="1"/>
</dbReference>
<dbReference type="NCBIfam" id="NF004197">
    <property type="entry name" value="PRK05653.1-1"/>
    <property type="match status" value="1"/>
</dbReference>
<dbReference type="NCBIfam" id="NF005559">
    <property type="entry name" value="PRK07231.1"/>
    <property type="match status" value="1"/>
</dbReference>
<dbReference type="NCBIfam" id="NF009464">
    <property type="entry name" value="PRK12824.1"/>
    <property type="match status" value="1"/>
</dbReference>
<dbReference type="NCBIfam" id="NF009466">
    <property type="entry name" value="PRK12826.1-2"/>
    <property type="match status" value="1"/>
</dbReference>
<dbReference type="PANTHER" id="PTHR42879">
    <property type="entry name" value="3-OXOACYL-(ACYL-CARRIER-PROTEIN) REDUCTASE"/>
    <property type="match status" value="1"/>
</dbReference>
<dbReference type="PANTHER" id="PTHR42879:SF2">
    <property type="entry name" value="3-OXOACYL-[ACYL-CARRIER-PROTEIN] REDUCTASE FABG"/>
    <property type="match status" value="1"/>
</dbReference>
<dbReference type="Pfam" id="PF13561">
    <property type="entry name" value="adh_short_C2"/>
    <property type="match status" value="1"/>
</dbReference>
<dbReference type="PRINTS" id="PR00081">
    <property type="entry name" value="GDHRDH"/>
</dbReference>
<dbReference type="PRINTS" id="PR00080">
    <property type="entry name" value="SDRFAMILY"/>
</dbReference>
<dbReference type="SMART" id="SM00822">
    <property type="entry name" value="PKS_KR"/>
    <property type="match status" value="1"/>
</dbReference>
<dbReference type="SUPFAM" id="SSF51735">
    <property type="entry name" value="NAD(P)-binding Rossmann-fold domains"/>
    <property type="match status" value="1"/>
</dbReference>
<dbReference type="PROSITE" id="PS00061">
    <property type="entry name" value="ADH_SHORT"/>
    <property type="match status" value="1"/>
</dbReference>
<protein>
    <recommendedName>
        <fullName>3-oxoacyl-[acyl-carrier-protein] reductase FabG</fullName>
        <ecNumber evidence="3 9 10 11">1.1.1.100</ecNumber>
    </recommendedName>
    <alternativeName>
        <fullName>3-ketoacyl-acyl carrier protein reductase</fullName>
    </alternativeName>
    <alternativeName>
        <fullName>Beta-Ketoacyl-acyl carrier protein reductase</fullName>
    </alternativeName>
    <alternativeName>
        <fullName>Beta-ketoacyl-ACP reductase</fullName>
    </alternativeName>
</protein>
<name>FABG_ECOLI</name>
<proteinExistence type="evidence at protein level"/>